<evidence type="ECO:0000250" key="1"/>
<evidence type="ECO:0000255" key="2">
    <source>
        <dbReference type="PROSITE-ProRule" id="PRU00044"/>
    </source>
</evidence>
<evidence type="ECO:0000269" key="3">
    <source>
    </source>
</evidence>
<keyword id="KW-0009">Actin-binding</keyword>
<keyword id="KW-0106">Calcium</keyword>
<keyword id="KW-0479">Metal-binding</keyword>
<keyword id="KW-1185">Reference proteome</keyword>
<keyword id="KW-0677">Repeat</keyword>
<reference key="1">
    <citation type="journal article" date="1991" name="Nature">
        <title>Requirement of yeast fimbrin for actin organization and morphogenesis in vivo.</title>
        <authorList>
            <person name="Adams A.E.M."/>
            <person name="Botstein D."/>
            <person name="Drubin D.G."/>
        </authorList>
    </citation>
    <scope>NUCLEOTIDE SEQUENCE [GENOMIC DNA]</scope>
</reference>
<reference key="2">
    <citation type="journal article" date="1997" name="Nature">
        <title>The nucleotide sequence of Saccharomyces cerevisiae chromosome IV.</title>
        <authorList>
            <person name="Jacq C."/>
            <person name="Alt-Moerbe J."/>
            <person name="Andre B."/>
            <person name="Arnold W."/>
            <person name="Bahr A."/>
            <person name="Ballesta J.P.G."/>
            <person name="Bargues M."/>
            <person name="Baron L."/>
            <person name="Becker A."/>
            <person name="Biteau N."/>
            <person name="Bloecker H."/>
            <person name="Blugeon C."/>
            <person name="Boskovic J."/>
            <person name="Brandt P."/>
            <person name="Brueckner M."/>
            <person name="Buitrago M.J."/>
            <person name="Coster F."/>
            <person name="Delaveau T."/>
            <person name="del Rey F."/>
            <person name="Dujon B."/>
            <person name="Eide L.G."/>
            <person name="Garcia-Cantalejo J.M."/>
            <person name="Goffeau A."/>
            <person name="Gomez-Peris A."/>
            <person name="Granotier C."/>
            <person name="Hanemann V."/>
            <person name="Hankeln T."/>
            <person name="Hoheisel J.D."/>
            <person name="Jaeger W."/>
            <person name="Jimenez A."/>
            <person name="Jonniaux J.-L."/>
            <person name="Kraemer C."/>
            <person name="Kuester H."/>
            <person name="Laamanen P."/>
            <person name="Legros Y."/>
            <person name="Louis E.J."/>
            <person name="Moeller-Rieker S."/>
            <person name="Monnet A."/>
            <person name="Moro M."/>
            <person name="Mueller-Auer S."/>
            <person name="Nussbaumer B."/>
            <person name="Paricio N."/>
            <person name="Paulin L."/>
            <person name="Perea J."/>
            <person name="Perez-Alonso M."/>
            <person name="Perez-Ortin J.E."/>
            <person name="Pohl T.M."/>
            <person name="Prydz H."/>
            <person name="Purnelle B."/>
            <person name="Rasmussen S.W."/>
            <person name="Remacha M.A."/>
            <person name="Revuelta J.L."/>
            <person name="Rieger M."/>
            <person name="Salom D."/>
            <person name="Saluz H.P."/>
            <person name="Saiz J.E."/>
            <person name="Saren A.-M."/>
            <person name="Schaefer M."/>
            <person name="Scharfe M."/>
            <person name="Schmidt E.R."/>
            <person name="Schneider C."/>
            <person name="Scholler P."/>
            <person name="Schwarz S."/>
            <person name="Soler-Mira A."/>
            <person name="Urrestarazu L.A."/>
            <person name="Verhasselt P."/>
            <person name="Vissers S."/>
            <person name="Voet M."/>
            <person name="Volckaert G."/>
            <person name="Wagner G."/>
            <person name="Wambutt R."/>
            <person name="Wedler E."/>
            <person name="Wedler H."/>
            <person name="Woelfl S."/>
            <person name="Harris D.E."/>
            <person name="Bowman S."/>
            <person name="Brown D."/>
            <person name="Churcher C.M."/>
            <person name="Connor R."/>
            <person name="Dedman K."/>
            <person name="Gentles S."/>
            <person name="Hamlin N."/>
            <person name="Hunt S."/>
            <person name="Jones L."/>
            <person name="McDonald S."/>
            <person name="Murphy L.D."/>
            <person name="Niblett D."/>
            <person name="Odell C."/>
            <person name="Oliver K."/>
            <person name="Rajandream M.A."/>
            <person name="Richards C."/>
            <person name="Shore L."/>
            <person name="Walsh S.V."/>
            <person name="Barrell B.G."/>
            <person name="Dietrich F.S."/>
            <person name="Mulligan J.T."/>
            <person name="Allen E."/>
            <person name="Araujo R."/>
            <person name="Aviles E."/>
            <person name="Berno A."/>
            <person name="Carpenter J."/>
            <person name="Chen E."/>
            <person name="Cherry J.M."/>
            <person name="Chung E."/>
            <person name="Duncan M."/>
            <person name="Hunicke-Smith S."/>
            <person name="Hyman R.W."/>
            <person name="Komp C."/>
            <person name="Lashkari D."/>
            <person name="Lew H."/>
            <person name="Lin D."/>
            <person name="Mosedale D."/>
            <person name="Nakahara K."/>
            <person name="Namath A."/>
            <person name="Oefner P."/>
            <person name="Oh C."/>
            <person name="Petel F.X."/>
            <person name="Roberts D."/>
            <person name="Schramm S."/>
            <person name="Schroeder M."/>
            <person name="Shogren T."/>
            <person name="Shroff N."/>
            <person name="Winant A."/>
            <person name="Yelton M.A."/>
            <person name="Botstein D."/>
            <person name="Davis R.W."/>
            <person name="Johnston M."/>
            <person name="Andrews S."/>
            <person name="Brinkman R."/>
            <person name="Cooper J."/>
            <person name="Ding H."/>
            <person name="Du Z."/>
            <person name="Favello A."/>
            <person name="Fulton L."/>
            <person name="Gattung S."/>
            <person name="Greco T."/>
            <person name="Hallsworth K."/>
            <person name="Hawkins J."/>
            <person name="Hillier L.W."/>
            <person name="Jier M."/>
            <person name="Johnson D."/>
            <person name="Johnston L."/>
            <person name="Kirsten J."/>
            <person name="Kucaba T."/>
            <person name="Langston Y."/>
            <person name="Latreille P."/>
            <person name="Le T."/>
            <person name="Mardis E."/>
            <person name="Menezes S."/>
            <person name="Miller N."/>
            <person name="Nhan M."/>
            <person name="Pauley A."/>
            <person name="Peluso D."/>
            <person name="Rifkin L."/>
            <person name="Riles L."/>
            <person name="Taich A."/>
            <person name="Trevaskis E."/>
            <person name="Vignati D."/>
            <person name="Wilcox L."/>
            <person name="Wohldman P."/>
            <person name="Vaudin M."/>
            <person name="Wilson R."/>
            <person name="Waterston R."/>
            <person name="Albermann K."/>
            <person name="Hani J."/>
            <person name="Heumann K."/>
            <person name="Kleine K."/>
            <person name="Mewes H.-W."/>
            <person name="Zollner A."/>
            <person name="Zaccaria P."/>
        </authorList>
    </citation>
    <scope>NUCLEOTIDE SEQUENCE [LARGE SCALE GENOMIC DNA]</scope>
    <source>
        <strain>ATCC 204508 / S288c</strain>
    </source>
</reference>
<reference key="3">
    <citation type="journal article" date="2014" name="G3 (Bethesda)">
        <title>The reference genome sequence of Saccharomyces cerevisiae: Then and now.</title>
        <authorList>
            <person name="Engel S.R."/>
            <person name="Dietrich F.S."/>
            <person name="Fisk D.G."/>
            <person name="Binkley G."/>
            <person name="Balakrishnan R."/>
            <person name="Costanzo M.C."/>
            <person name="Dwight S.S."/>
            <person name="Hitz B.C."/>
            <person name="Karra K."/>
            <person name="Nash R.S."/>
            <person name="Weng S."/>
            <person name="Wong E.D."/>
            <person name="Lloyd P."/>
            <person name="Skrzypek M.S."/>
            <person name="Miyasato S.R."/>
            <person name="Simison M."/>
            <person name="Cherry J.M."/>
        </authorList>
    </citation>
    <scope>GENOME REANNOTATION</scope>
    <source>
        <strain>ATCC 204508 / S288c</strain>
    </source>
</reference>
<reference key="4">
    <citation type="journal article" date="2003" name="Nature">
        <title>Global analysis of protein expression in yeast.</title>
        <authorList>
            <person name="Ghaemmaghami S."/>
            <person name="Huh W.-K."/>
            <person name="Bower K."/>
            <person name="Howson R.W."/>
            <person name="Belle A."/>
            <person name="Dephoure N."/>
            <person name="O'Shea E.K."/>
            <person name="Weissman J.S."/>
        </authorList>
    </citation>
    <scope>LEVEL OF PROTEIN EXPRESSION [LARGE SCALE ANALYSIS]</scope>
</reference>
<reference key="5">
    <citation type="journal article" date="2009" name="Science">
        <title>Global analysis of Cdk1 substrate phosphorylation sites provides insights into evolution.</title>
        <authorList>
            <person name="Holt L.J."/>
            <person name="Tuch B.B."/>
            <person name="Villen J."/>
            <person name="Johnson A.D."/>
            <person name="Gygi S.P."/>
            <person name="Morgan D.O."/>
        </authorList>
    </citation>
    <scope>IDENTIFICATION BY MASS SPECTROMETRY [LARGE SCALE ANALYSIS]</scope>
</reference>
<reference key="6">
    <citation type="journal article" date="2012" name="Proc. Natl. Acad. Sci. U.S.A.">
        <title>N-terminal acetylome analyses and functional insights of the N-terminal acetyltransferase NatB.</title>
        <authorList>
            <person name="Van Damme P."/>
            <person name="Lasa M."/>
            <person name="Polevoda B."/>
            <person name="Gazquez C."/>
            <person name="Elosegui-Artola A."/>
            <person name="Kim D.S."/>
            <person name="De Juan-Pardo E."/>
            <person name="Demeyer K."/>
            <person name="Hole K."/>
            <person name="Larrea E."/>
            <person name="Timmerman E."/>
            <person name="Prieto J."/>
            <person name="Arnesen T."/>
            <person name="Sherman F."/>
            <person name="Gevaert K."/>
            <person name="Aldabe R."/>
        </authorList>
    </citation>
    <scope>IDENTIFICATION BY MASS SPECTROMETRY [LARGE SCALE ANALYSIS]</scope>
</reference>
<protein>
    <recommendedName>
        <fullName>Fimbrin</fullName>
    </recommendedName>
    <alternativeName>
        <fullName>ABP67</fullName>
    </alternativeName>
</protein>
<feature type="chain" id="PRO_0000073757" description="Fimbrin">
    <location>
        <begin position="1"/>
        <end position="642"/>
    </location>
</feature>
<feature type="domain" description="EF-hand 1">
    <location>
        <begin position="16"/>
        <end position="50"/>
    </location>
</feature>
<feature type="domain" description="EF-hand 2">
    <location>
        <begin position="51"/>
        <end position="86"/>
    </location>
</feature>
<feature type="domain" description="Calponin-homology (CH) 1" evidence="2">
    <location>
        <begin position="139"/>
        <end position="259"/>
    </location>
</feature>
<feature type="domain" description="Calponin-homology (CH) 2" evidence="2">
    <location>
        <begin position="287"/>
        <end position="390"/>
    </location>
</feature>
<feature type="domain" description="Calponin-homology (CH) 3" evidence="2">
    <location>
        <begin position="411"/>
        <end position="521"/>
    </location>
</feature>
<feature type="domain" description="Calponin-homology (CH) 4" evidence="2">
    <location>
        <begin position="534"/>
        <end position="642"/>
    </location>
</feature>
<feature type="region of interest" description="Actin-binding 1">
    <location>
        <begin position="125"/>
        <end position="394"/>
    </location>
</feature>
<feature type="region of interest" description="Actin-binding 2">
    <location>
        <begin position="395"/>
        <end position="642"/>
    </location>
</feature>
<feature type="binding site" evidence="1">
    <location>
        <position position="29"/>
    </location>
    <ligand>
        <name>Ca(2+)</name>
        <dbReference type="ChEBI" id="CHEBI:29108"/>
        <label>1</label>
    </ligand>
</feature>
<feature type="binding site" evidence="1">
    <location>
        <position position="31"/>
    </location>
    <ligand>
        <name>Ca(2+)</name>
        <dbReference type="ChEBI" id="CHEBI:29108"/>
        <label>1</label>
    </ligand>
</feature>
<feature type="binding site" evidence="1">
    <location>
        <position position="35"/>
    </location>
    <ligand>
        <name>Ca(2+)</name>
        <dbReference type="ChEBI" id="CHEBI:29108"/>
        <label>1</label>
    </ligand>
</feature>
<feature type="binding site" evidence="1">
    <location>
        <position position="66"/>
    </location>
    <ligand>
        <name>Ca(2+)</name>
        <dbReference type="ChEBI" id="CHEBI:29108"/>
        <label>2</label>
    </ligand>
</feature>
<feature type="binding site" evidence="1">
    <location>
        <position position="68"/>
    </location>
    <ligand>
        <name>Ca(2+)</name>
        <dbReference type="ChEBI" id="CHEBI:29108"/>
        <label>2</label>
    </ligand>
</feature>
<feature type="binding site" evidence="1">
    <location>
        <position position="70"/>
    </location>
    <ligand>
        <name>Ca(2+)</name>
        <dbReference type="ChEBI" id="CHEBI:29108"/>
        <label>2</label>
    </ligand>
</feature>
<feature type="binding site" evidence="1">
    <location>
        <position position="75"/>
    </location>
    <ligand>
        <name>Ca(2+)</name>
        <dbReference type="ChEBI" id="CHEBI:29108"/>
        <label>2</label>
    </ligand>
</feature>
<comment type="function">
    <text>Binds to actin, and functionally associates with actin structures involved in the development and maintenance of cell polarity.</text>
</comment>
<comment type="interaction">
    <interactant intactId="EBI-6931">
        <id>P32599</id>
    </interactant>
    <interactant intactId="EBI-2169">
        <id>P60010</id>
        <label>ACT1</label>
    </interactant>
    <organismsDiffer>false</organismsDiffer>
    <experiments>4</experiments>
</comment>
<comment type="miscellaneous">
    <text evidence="3">Present with 3510 molecules/cell in log phase SD medium.</text>
</comment>
<sequence length="642" mass="71773">MNIVKLQRKFPILTQEDLFSTIEKFRAIDLDDKGWVEKQQALEAVSKDGDATYDEARETLKHVGVDASGRVELDDYVGLVAKLRESKTGAAPQTTFNVAPNSTPIVSTAATGLQHKGKGTQAKIIVAGSQTGTTHTINEEERREFTKHINSVLAGDQDIGDLLPFPTDTFQLFDECRDGLVLSKLINDSVPDTIDTRVLNWPKKGKELNNFQASENANIVINSAKAIGCVVVNVHSEDIIEGREHLILGLIWQIIRRGLLSKIDIKLHPELYRLLEDDETLEQFLRLPPEQILLRWFNYHLKQANWNRRVTNFSKDVSDGENYTILLNQLDPALCSKAPLQTTDLMERAEQVLQNAEKLDCRKYLTPSSLVAGNPKLNLAFVAHLFNTHPGLEPIQEEEKPEIEEFDAEGEREARVFTLWLNSLDVDPPVISLFDDLKDGLILLQAYEKVMPGAVDFKHVNKRPASGAEISRFKALENTNYAVDLGRAKGFSLVGIEGSDIVDGNKLLTLGLVWQLMRRNISITMKTLSSSGRDMSDSQILKWAQDQVTKGGKNSTIRSFKDQALSNAHFLLDVLNGIAPGYVDYDLVTPGNTEEERYANARLAISIARKLGALIWLVPEDINEVRARLIITFIASLMTLNK</sequence>
<dbReference type="EMBL" id="X63867">
    <property type="protein sequence ID" value="CAA45346.1"/>
    <property type="molecule type" value="Genomic_DNA"/>
</dbReference>
<dbReference type="EMBL" id="Z48179">
    <property type="protein sequence ID" value="CAA88210.1"/>
    <property type="molecule type" value="Genomic_DNA"/>
</dbReference>
<dbReference type="EMBL" id="BK006938">
    <property type="protein sequence ID" value="DAA11975.1"/>
    <property type="molecule type" value="Genomic_DNA"/>
</dbReference>
<dbReference type="PIR" id="S29320">
    <property type="entry name" value="S29320"/>
</dbReference>
<dbReference type="RefSeq" id="NP_010414.3">
    <property type="nucleotide sequence ID" value="NM_001180437.3"/>
</dbReference>
<dbReference type="SMR" id="P32599"/>
<dbReference type="BioGRID" id="32185">
    <property type="interactions" value="317"/>
</dbReference>
<dbReference type="DIP" id="DIP-718N"/>
<dbReference type="FunCoup" id="P32599">
    <property type="interactions" value="755"/>
</dbReference>
<dbReference type="IntAct" id="P32599">
    <property type="interactions" value="23"/>
</dbReference>
<dbReference type="MINT" id="P32599"/>
<dbReference type="STRING" id="4932.YDR129C"/>
<dbReference type="iPTMnet" id="P32599"/>
<dbReference type="PaxDb" id="4932-YDR129C"/>
<dbReference type="PeptideAtlas" id="P32599"/>
<dbReference type="TopDownProteomics" id="P32599"/>
<dbReference type="EnsemblFungi" id="YDR129C_mRNA">
    <property type="protein sequence ID" value="YDR129C"/>
    <property type="gene ID" value="YDR129C"/>
</dbReference>
<dbReference type="GeneID" id="851707"/>
<dbReference type="KEGG" id="sce:YDR129C"/>
<dbReference type="AGR" id="SGD:S000002536"/>
<dbReference type="SGD" id="S000002536">
    <property type="gene designation" value="SAC6"/>
</dbReference>
<dbReference type="VEuPathDB" id="FungiDB:YDR129C"/>
<dbReference type="eggNOG" id="KOG0046">
    <property type="taxonomic scope" value="Eukaryota"/>
</dbReference>
<dbReference type="GeneTree" id="ENSGT00950000183097"/>
<dbReference type="HOGENOM" id="CLU_015284_3_0_1"/>
<dbReference type="InParanoid" id="P32599"/>
<dbReference type="OMA" id="WQLMRKN"/>
<dbReference type="OrthoDB" id="431378at2759"/>
<dbReference type="BioCyc" id="YEAST:G3O-29728-MONOMER"/>
<dbReference type="BioGRID-ORCS" id="851707">
    <property type="hits" value="6 hits in 10 CRISPR screens"/>
</dbReference>
<dbReference type="PRO" id="PR:P32599"/>
<dbReference type="Proteomes" id="UP000002311">
    <property type="component" value="Chromosome IV"/>
</dbReference>
<dbReference type="RNAct" id="P32599">
    <property type="molecule type" value="protein"/>
</dbReference>
<dbReference type="GO" id="GO:0030479">
    <property type="term" value="C:actin cortical patch"/>
    <property type="evidence" value="ECO:0000314"/>
    <property type="project" value="SGD"/>
</dbReference>
<dbReference type="GO" id="GO:0005884">
    <property type="term" value="C:actin filament"/>
    <property type="evidence" value="ECO:0000318"/>
    <property type="project" value="GO_Central"/>
</dbReference>
<dbReference type="GO" id="GO:0032432">
    <property type="term" value="C:actin filament bundle"/>
    <property type="evidence" value="ECO:0000314"/>
    <property type="project" value="SGD"/>
</dbReference>
<dbReference type="GO" id="GO:0005934">
    <property type="term" value="C:cellular bud tip"/>
    <property type="evidence" value="ECO:0007005"/>
    <property type="project" value="SGD"/>
</dbReference>
<dbReference type="GO" id="GO:0005737">
    <property type="term" value="C:cytoplasm"/>
    <property type="evidence" value="ECO:0007005"/>
    <property type="project" value="SGD"/>
</dbReference>
<dbReference type="GO" id="GO:0043332">
    <property type="term" value="C:mating projection tip"/>
    <property type="evidence" value="ECO:0007005"/>
    <property type="project" value="SGD"/>
</dbReference>
<dbReference type="GO" id="GO:0005886">
    <property type="term" value="C:plasma membrane"/>
    <property type="evidence" value="ECO:0007005"/>
    <property type="project" value="SGD"/>
</dbReference>
<dbReference type="GO" id="GO:0051015">
    <property type="term" value="F:actin filament binding"/>
    <property type="evidence" value="ECO:0000314"/>
    <property type="project" value="SGD"/>
</dbReference>
<dbReference type="GO" id="GO:0046872">
    <property type="term" value="F:metal ion binding"/>
    <property type="evidence" value="ECO:0007669"/>
    <property type="project" value="UniProtKB-KW"/>
</dbReference>
<dbReference type="GO" id="GO:0030674">
    <property type="term" value="F:protein-macromolecule adaptor activity"/>
    <property type="evidence" value="ECO:0000314"/>
    <property type="project" value="SGD"/>
</dbReference>
<dbReference type="GO" id="GO:0051017">
    <property type="term" value="P:actin filament bundle assembly"/>
    <property type="evidence" value="ECO:0000318"/>
    <property type="project" value="GO_Central"/>
</dbReference>
<dbReference type="GO" id="GO:0051639">
    <property type="term" value="P:actin filament network formation"/>
    <property type="evidence" value="ECO:0000318"/>
    <property type="project" value="GO_Central"/>
</dbReference>
<dbReference type="GO" id="GO:0007015">
    <property type="term" value="P:actin filament organization"/>
    <property type="evidence" value="ECO:0000315"/>
    <property type="project" value="SGD"/>
</dbReference>
<dbReference type="GO" id="GO:0070649">
    <property type="term" value="P:formin-nucleated actin cable assembly"/>
    <property type="evidence" value="ECO:0000315"/>
    <property type="project" value="SGD"/>
</dbReference>
<dbReference type="CDD" id="cd21294">
    <property type="entry name" value="CH_FIMB_rpt1"/>
    <property type="match status" value="1"/>
</dbReference>
<dbReference type="CDD" id="cd21297">
    <property type="entry name" value="CH_FIMB_rpt2"/>
    <property type="match status" value="1"/>
</dbReference>
<dbReference type="CDD" id="cd21300">
    <property type="entry name" value="CH_FIMB_rpt3"/>
    <property type="match status" value="1"/>
</dbReference>
<dbReference type="CDD" id="cd21303">
    <property type="entry name" value="CH_FIMB_rpt4"/>
    <property type="match status" value="1"/>
</dbReference>
<dbReference type="FunFam" id="1.10.418.10:FF:000042">
    <property type="entry name" value="Fimbrin, putative"/>
    <property type="match status" value="1"/>
</dbReference>
<dbReference type="FunFam" id="1.10.418.10:FF:000010">
    <property type="entry name" value="Plastin-3 isoform 1"/>
    <property type="match status" value="1"/>
</dbReference>
<dbReference type="FunFam" id="1.10.418.10:FF:000016">
    <property type="entry name" value="Probable fimbrin"/>
    <property type="match status" value="1"/>
</dbReference>
<dbReference type="FunFam" id="1.10.418.10:FF:000027">
    <property type="entry name" value="Probable fimbrin"/>
    <property type="match status" value="1"/>
</dbReference>
<dbReference type="Gene3D" id="1.10.418.10">
    <property type="entry name" value="Calponin-like domain"/>
    <property type="match status" value="4"/>
</dbReference>
<dbReference type="InterPro" id="IPR001589">
    <property type="entry name" value="Actinin_actin-bd_CS"/>
</dbReference>
<dbReference type="InterPro" id="IPR001715">
    <property type="entry name" value="CH_dom"/>
</dbReference>
<dbReference type="InterPro" id="IPR036872">
    <property type="entry name" value="CH_dom_sf"/>
</dbReference>
<dbReference type="InterPro" id="IPR011992">
    <property type="entry name" value="EF-hand-dom_pair"/>
</dbReference>
<dbReference type="InterPro" id="IPR039959">
    <property type="entry name" value="Fimbrin/Plastin"/>
</dbReference>
<dbReference type="PANTHER" id="PTHR19961:SF18">
    <property type="entry name" value="FI19014P1"/>
    <property type="match status" value="1"/>
</dbReference>
<dbReference type="PANTHER" id="PTHR19961">
    <property type="entry name" value="FIMBRIN/PLASTIN"/>
    <property type="match status" value="1"/>
</dbReference>
<dbReference type="Pfam" id="PF00307">
    <property type="entry name" value="CH"/>
    <property type="match status" value="4"/>
</dbReference>
<dbReference type="SMART" id="SM00033">
    <property type="entry name" value="CH"/>
    <property type="match status" value="4"/>
</dbReference>
<dbReference type="SUPFAM" id="SSF47576">
    <property type="entry name" value="Calponin-homology domain, CH-domain"/>
    <property type="match status" value="1"/>
</dbReference>
<dbReference type="SUPFAM" id="SSF47473">
    <property type="entry name" value="EF-hand"/>
    <property type="match status" value="1"/>
</dbReference>
<dbReference type="PROSITE" id="PS00019">
    <property type="entry name" value="ACTININ_1"/>
    <property type="match status" value="1"/>
</dbReference>
<dbReference type="PROSITE" id="PS00020">
    <property type="entry name" value="ACTININ_2"/>
    <property type="match status" value="2"/>
</dbReference>
<dbReference type="PROSITE" id="PS50021">
    <property type="entry name" value="CH"/>
    <property type="match status" value="4"/>
</dbReference>
<accession>P32599</accession>
<accession>D6VSB5</accession>
<proteinExistence type="evidence at protein level"/>
<gene>
    <name type="primary">SAC6</name>
    <name type="ordered locus">YDR129C</name>
    <name type="ORF">YD9302.04C</name>
</gene>
<name>FIMB_YEAST</name>
<organism>
    <name type="scientific">Saccharomyces cerevisiae (strain ATCC 204508 / S288c)</name>
    <name type="common">Baker's yeast</name>
    <dbReference type="NCBI Taxonomy" id="559292"/>
    <lineage>
        <taxon>Eukaryota</taxon>
        <taxon>Fungi</taxon>
        <taxon>Dikarya</taxon>
        <taxon>Ascomycota</taxon>
        <taxon>Saccharomycotina</taxon>
        <taxon>Saccharomycetes</taxon>
        <taxon>Saccharomycetales</taxon>
        <taxon>Saccharomycetaceae</taxon>
        <taxon>Saccharomyces</taxon>
    </lineage>
</organism>